<comment type="function">
    <text evidence="1 2 3 5 6 7 8">Involved in the catabolism of short chain fatty acids (SCFA) via the tricarboxylic acid (TCA)(acetyl degradation route) and the 2-methylcitrate cycle I (propionate degradation route). Catalyzes the reversible isomerization of citrate to isocitrate via cis-aconitate. Also catalyzes the hydration of 2-methyl-cis-aconitate to yield (2R,3S)-2-methylisocitrate. The apo form of AcnB functions as a RNA-binding regulatory protein. During oxidative stress inactive AcnB apo-enzyme without iron sulfur clusters binds the acnB mRNA 3' UTRs (untranslated regions), stabilizes acnB mRNA and increases AcnB synthesis, thus mediating a post-transcriptional positive autoregulatory switch. AcnB also decreases the stability of the sodA transcript.</text>
</comment>
<comment type="catalytic activity">
    <reaction evidence="1">
        <text>citrate = D-threo-isocitrate</text>
        <dbReference type="Rhea" id="RHEA:10336"/>
        <dbReference type="ChEBI" id="CHEBI:15562"/>
        <dbReference type="ChEBI" id="CHEBI:16947"/>
        <dbReference type="EC" id="4.2.1.3"/>
    </reaction>
</comment>
<comment type="catalytic activity">
    <reaction evidence="5">
        <text>(2S,3R)-3-hydroxybutane-1,2,3-tricarboxylate = 2-methyl-cis-aconitate + H2O</text>
        <dbReference type="Rhea" id="RHEA:17941"/>
        <dbReference type="ChEBI" id="CHEBI:15377"/>
        <dbReference type="ChEBI" id="CHEBI:57429"/>
        <dbReference type="ChEBI" id="CHEBI:57872"/>
        <dbReference type="EC" id="4.2.1.99"/>
    </reaction>
</comment>
<comment type="cofactor">
    <cofactor evidence="4">
        <name>[4Fe-4S] cluster</name>
        <dbReference type="ChEBI" id="CHEBI:49883"/>
    </cofactor>
    <text evidence="4">Binds 1 [4Fe-4S] cluster per subunit.</text>
</comment>
<comment type="biophysicochemical properties">
    <kinetics>
        <KM evidence="1 5">11 mM for citrate</KM>
        <KM evidence="1 5">0.016 mM for cis-aconitate</KM>
        <KM evidence="1 5">0.051 mM for isocitrate (using 0.01-0.8 mM substrate)</KM>
        <KM evidence="1 5">19.7 mM for isocitrate (using 0.8-40 mM substrate)</KM>
        <KM evidence="1 5">0.21 mM for (2R,3S)-2-methylisocitrate</KM>
        <Vmax evidence="1 5">23.8 umol/min/mg enzyme with citrate as substrate</Vmax>
        <Vmax evidence="1 5">39.1 umol/min/mg enzyme with cis-aconitate as substrate</Vmax>
        <Vmax evidence="1 5">5.92 umol/min/mg enzyme using 0.01-0.8 mM isocitrate as substrate</Vmax>
        <Vmax evidence="1 5">57.8 umol/min/mg enzyme using 0.8-40 mM isocitrate as substrate</Vmax>
    </kinetics>
    <phDependence>
        <text evidence="1 5">Optimum pH is 7.4.</text>
    </phDependence>
</comment>
<comment type="pathway">
    <text evidence="15">Organic acid metabolism; propanoate degradation.</text>
</comment>
<comment type="pathway">
    <text evidence="15">Carbohydrate metabolism; tricarboxylic acid cycle; isocitrate from oxaloacetate: step 2/2.</text>
</comment>
<comment type="subunit">
    <text evidence="4 6 8">Monomer. AcnB can also form a homodimer. The monomer-homodimer transition is dependent on iron availability and the carboxymethylation of C-273 inhibits the dimer formation.</text>
</comment>
<comment type="disruption phenotype">
    <text evidence="3 6 9">Cells lacking this gene are more sensitive to peroxide stress. The acnAB double mutant does not grow on unsupplemented glucose minimal medium and does not respond under aerobic conditions to glutamate. The acnAB double mutant retains a low but significant aconitase activity.</text>
</comment>
<comment type="miscellaneous">
    <text evidence="1">AcnB is sensitive to oxidation in vivo.</text>
</comment>
<comment type="similarity">
    <text evidence="13">Belongs to the aconitase/IPM isomerase family.</text>
</comment>
<accession>P36683</accession>
<accession>P36648</accession>
<accession>P75652</accession>
<accession>Q59382</accession>
<gene>
    <name evidence="12" type="primary">acnB</name>
    <name type="synonym">yacI</name>
    <name type="synonym">yacJ</name>
    <name type="ordered locus">b0118</name>
    <name type="ordered locus">JW0114</name>
</gene>
<feature type="chain" id="PRO_0000076675" description="Aconitate hydratase B">
    <location>
        <begin position="1"/>
        <end position="865"/>
    </location>
</feature>
<feature type="binding site" evidence="4">
    <location>
        <position position="191"/>
    </location>
    <ligand>
        <name>substrate</name>
    </ligand>
</feature>
<feature type="binding site" evidence="4">
    <location>
        <begin position="244"/>
        <end position="246"/>
    </location>
    <ligand>
        <name>substrate</name>
    </ligand>
</feature>
<feature type="binding site" evidence="4">
    <location>
        <begin position="414"/>
        <end position="416"/>
    </location>
    <ligand>
        <name>substrate</name>
    </ligand>
</feature>
<feature type="binding site" evidence="4">
    <location>
        <position position="498"/>
    </location>
    <ligand>
        <name>substrate</name>
    </ligand>
</feature>
<feature type="binding site" evidence="4">
    <location>
        <position position="710"/>
    </location>
    <ligand>
        <name>[4Fe-4S] cluster</name>
        <dbReference type="ChEBI" id="CHEBI:49883"/>
    </ligand>
</feature>
<feature type="binding site" evidence="4">
    <location>
        <position position="769"/>
    </location>
    <ligand>
        <name>[4Fe-4S] cluster</name>
        <dbReference type="ChEBI" id="CHEBI:49883"/>
    </ligand>
</feature>
<feature type="binding site" evidence="4">
    <location>
        <position position="772"/>
    </location>
    <ligand>
        <name>[4Fe-4S] cluster</name>
        <dbReference type="ChEBI" id="CHEBI:49883"/>
    </ligand>
</feature>
<feature type="binding site" evidence="4">
    <location>
        <position position="791"/>
    </location>
    <ligand>
        <name>substrate</name>
    </ligand>
</feature>
<feature type="binding site" evidence="4">
    <location>
        <position position="796"/>
    </location>
    <ligand>
        <name>substrate</name>
    </ligand>
</feature>
<feature type="mutagenesis site" description="Inhibits the dimer formation." evidence="6">
    <original>C</original>
    <variation>S</variation>
    <location>
        <position position="769"/>
    </location>
</feature>
<feature type="helix" evidence="16">
    <location>
        <begin position="2"/>
        <end position="14"/>
    </location>
</feature>
<feature type="helix" evidence="16">
    <location>
        <begin position="24"/>
        <end position="35"/>
    </location>
</feature>
<feature type="helix" evidence="16">
    <location>
        <begin position="42"/>
        <end position="51"/>
    </location>
</feature>
<feature type="helix" evidence="16">
    <location>
        <begin position="59"/>
        <end position="72"/>
    </location>
</feature>
<feature type="helix" evidence="16">
    <location>
        <begin position="83"/>
        <end position="90"/>
    </location>
</feature>
<feature type="helix" evidence="16">
    <location>
        <begin position="99"/>
        <end position="104"/>
    </location>
</feature>
<feature type="helix" evidence="16">
    <location>
        <begin position="105"/>
        <end position="107"/>
    </location>
</feature>
<feature type="turn" evidence="16">
    <location>
        <begin position="109"/>
        <end position="111"/>
    </location>
</feature>
<feature type="helix" evidence="16">
    <location>
        <begin position="112"/>
        <end position="120"/>
    </location>
</feature>
<feature type="helix" evidence="16">
    <location>
        <begin position="128"/>
        <end position="137"/>
    </location>
</feature>
<feature type="helix" evidence="16">
    <location>
        <begin position="141"/>
        <end position="151"/>
    </location>
</feature>
<feature type="helix" evidence="16">
    <location>
        <begin position="154"/>
        <end position="157"/>
    </location>
</feature>
<feature type="strand" evidence="16">
    <location>
        <begin position="166"/>
        <end position="178"/>
    </location>
</feature>
<feature type="helix" evidence="16">
    <location>
        <begin position="179"/>
        <end position="182"/>
    </location>
</feature>
<feature type="helix" evidence="16">
    <location>
        <begin position="185"/>
        <end position="190"/>
    </location>
</feature>
<feature type="helix" evidence="16">
    <location>
        <begin position="194"/>
        <end position="197"/>
    </location>
</feature>
<feature type="helix" evidence="16">
    <location>
        <begin position="198"/>
        <end position="200"/>
    </location>
</feature>
<feature type="turn" evidence="16">
    <location>
        <begin position="214"/>
        <end position="216"/>
    </location>
</feature>
<feature type="helix" evidence="16">
    <location>
        <begin position="220"/>
        <end position="227"/>
    </location>
</feature>
<feature type="strand" evidence="16">
    <location>
        <begin position="233"/>
        <end position="243"/>
    </location>
</feature>
<feature type="helix" evidence="16">
    <location>
        <begin position="248"/>
        <end position="257"/>
    </location>
</feature>
<feature type="strand" evidence="16">
    <location>
        <begin position="258"/>
        <end position="261"/>
    </location>
</feature>
<feature type="strand" evidence="16">
    <location>
        <begin position="264"/>
        <end position="269"/>
    </location>
</feature>
<feature type="strand" evidence="16">
    <location>
        <begin position="272"/>
        <end position="278"/>
    </location>
</feature>
<feature type="helix" evidence="16">
    <location>
        <begin position="280"/>
        <end position="288"/>
    </location>
</feature>
<feature type="strand" evidence="16">
    <location>
        <begin position="292"/>
        <end position="295"/>
    </location>
</feature>
<feature type="strand" evidence="16">
    <location>
        <begin position="306"/>
        <end position="310"/>
    </location>
</feature>
<feature type="turn" evidence="16">
    <location>
        <begin position="311"/>
        <end position="314"/>
    </location>
</feature>
<feature type="strand" evidence="16">
    <location>
        <begin position="315"/>
        <end position="318"/>
    </location>
</feature>
<feature type="turn" evidence="16">
    <location>
        <begin position="319"/>
        <end position="321"/>
    </location>
</feature>
<feature type="strand" evidence="16">
    <location>
        <begin position="324"/>
        <end position="327"/>
    </location>
</feature>
<feature type="helix" evidence="16">
    <location>
        <begin position="334"/>
        <end position="341"/>
    </location>
</feature>
<feature type="helix" evidence="16">
    <location>
        <begin position="344"/>
        <end position="360"/>
    </location>
</feature>
<feature type="helix" evidence="16">
    <location>
        <begin position="384"/>
        <end position="391"/>
    </location>
</feature>
<feature type="turn" evidence="16">
    <location>
        <begin position="392"/>
        <end position="394"/>
    </location>
</feature>
<feature type="strand" evidence="16">
    <location>
        <begin position="409"/>
        <end position="413"/>
    </location>
</feature>
<feature type="turn" evidence="16">
    <location>
        <begin position="415"/>
        <end position="417"/>
    </location>
</feature>
<feature type="helix" evidence="16">
    <location>
        <begin position="418"/>
        <end position="427"/>
    </location>
</feature>
<feature type="strand" evidence="16">
    <location>
        <begin position="438"/>
        <end position="440"/>
    </location>
</feature>
<feature type="strand" evidence="16">
    <location>
        <begin position="444"/>
        <end position="448"/>
    </location>
</feature>
<feature type="helix" evidence="16">
    <location>
        <begin position="451"/>
        <end position="465"/>
    </location>
</feature>
<feature type="turn" evidence="16">
    <location>
        <begin position="466"/>
        <end position="468"/>
    </location>
</feature>
<feature type="helix" evidence="16">
    <location>
        <begin position="479"/>
        <end position="483"/>
    </location>
</feature>
<feature type="helix" evidence="16">
    <location>
        <begin position="484"/>
        <end position="486"/>
    </location>
</feature>
<feature type="strand" evidence="16">
    <location>
        <begin position="492"/>
        <end position="497"/>
    </location>
</feature>
<feature type="strand" evidence="16">
    <location>
        <begin position="503"/>
        <end position="507"/>
    </location>
</feature>
<feature type="helix" evidence="16">
    <location>
        <begin position="512"/>
        <end position="521"/>
    </location>
</feature>
<feature type="strand" evidence="16">
    <location>
        <begin position="531"/>
        <end position="538"/>
    </location>
</feature>
<feature type="helix" evidence="16">
    <location>
        <begin position="546"/>
        <end position="559"/>
    </location>
</feature>
<feature type="turn" evidence="16">
    <location>
        <begin position="573"/>
        <end position="576"/>
    </location>
</feature>
<feature type="strand" evidence="16">
    <location>
        <begin position="577"/>
        <end position="583"/>
    </location>
</feature>
<feature type="helix" evidence="16">
    <location>
        <begin position="589"/>
        <end position="597"/>
    </location>
</feature>
<feature type="helix" evidence="16">
    <location>
        <begin position="598"/>
        <end position="600"/>
    </location>
</feature>
<feature type="turn" evidence="16">
    <location>
        <begin position="601"/>
        <end position="603"/>
    </location>
</feature>
<feature type="strand" evidence="16">
    <location>
        <begin position="605"/>
        <end position="609"/>
    </location>
</feature>
<feature type="helix" evidence="16">
    <location>
        <begin position="613"/>
        <end position="632"/>
    </location>
</feature>
<feature type="helix" evidence="16">
    <location>
        <begin position="638"/>
        <end position="653"/>
    </location>
</feature>
<feature type="strand" evidence="16">
    <location>
        <begin position="667"/>
        <end position="673"/>
    </location>
</feature>
<feature type="helix" evidence="16">
    <location>
        <begin position="674"/>
        <end position="676"/>
    </location>
</feature>
<feature type="strand" evidence="16">
    <location>
        <begin position="681"/>
        <end position="683"/>
    </location>
</feature>
<feature type="strand" evidence="16">
    <location>
        <begin position="691"/>
        <end position="693"/>
    </location>
</feature>
<feature type="helix" evidence="16">
    <location>
        <begin position="694"/>
        <end position="696"/>
    </location>
</feature>
<feature type="turn" evidence="16">
    <location>
        <begin position="697"/>
        <end position="699"/>
    </location>
</feature>
<feature type="strand" evidence="16">
    <location>
        <begin position="704"/>
        <end position="707"/>
    </location>
</feature>
<feature type="helix" evidence="16">
    <location>
        <begin position="714"/>
        <end position="726"/>
    </location>
</feature>
<feature type="strand" evidence="16">
    <location>
        <begin position="732"/>
        <end position="737"/>
    </location>
</feature>
<feature type="helix" evidence="16">
    <location>
        <begin position="742"/>
        <end position="750"/>
    </location>
</feature>
<feature type="helix" evidence="16">
    <location>
        <begin position="753"/>
        <end position="760"/>
    </location>
</feature>
<feature type="helix" evidence="16">
    <location>
        <begin position="770"/>
        <end position="772"/>
    </location>
</feature>
<feature type="strand" evidence="16">
    <location>
        <begin position="775"/>
        <end position="777"/>
    </location>
</feature>
<feature type="strand" evidence="16">
    <location>
        <begin position="784"/>
        <end position="790"/>
    </location>
</feature>
<feature type="strand" evidence="16">
    <location>
        <begin position="796"/>
        <end position="798"/>
    </location>
</feature>
<feature type="strand" evidence="16">
    <location>
        <begin position="802"/>
        <end position="805"/>
    </location>
</feature>
<feature type="helix" evidence="16">
    <location>
        <begin position="808"/>
        <end position="817"/>
    </location>
</feature>
<feature type="helix" evidence="16">
    <location>
        <begin position="823"/>
        <end position="834"/>
    </location>
</feature>
<feature type="helix" evidence="16">
    <location>
        <begin position="837"/>
        <end position="840"/>
    </location>
</feature>
<feature type="helix" evidence="16">
    <location>
        <begin position="846"/>
        <end position="848"/>
    </location>
</feature>
<feature type="helix" evidence="16">
    <location>
        <begin position="850"/>
        <end position="857"/>
    </location>
</feature>
<evidence type="ECO:0000269" key="1">
    <source>
    </source>
</evidence>
<evidence type="ECO:0000269" key="2">
    <source>
    </source>
</evidence>
<evidence type="ECO:0000269" key="3">
    <source>
    </source>
</evidence>
<evidence type="ECO:0000269" key="4">
    <source>
    </source>
</evidence>
<evidence type="ECO:0000269" key="5">
    <source>
    </source>
</evidence>
<evidence type="ECO:0000269" key="6">
    <source>
    </source>
</evidence>
<evidence type="ECO:0000269" key="7">
    <source>
    </source>
</evidence>
<evidence type="ECO:0000269" key="8">
    <source>
    </source>
</evidence>
<evidence type="ECO:0000269" key="9">
    <source>
    </source>
</evidence>
<evidence type="ECO:0000303" key="10">
    <source>
    </source>
</evidence>
<evidence type="ECO:0000303" key="11">
    <source>
    </source>
</evidence>
<evidence type="ECO:0000303" key="12">
    <source>
    </source>
</evidence>
<evidence type="ECO:0000305" key="13"/>
<evidence type="ECO:0000305" key="14">
    <source>
    </source>
</evidence>
<evidence type="ECO:0000305" key="15">
    <source>
    </source>
</evidence>
<evidence type="ECO:0007829" key="16">
    <source>
        <dbReference type="PDB" id="1L5J"/>
    </source>
</evidence>
<name>ACNB_ECOLI</name>
<keyword id="KW-0002">3D-structure</keyword>
<keyword id="KW-0004">4Fe-4S</keyword>
<keyword id="KW-0903">Direct protein sequencing</keyword>
<keyword id="KW-0408">Iron</keyword>
<keyword id="KW-0411">Iron-sulfur</keyword>
<keyword id="KW-0456">Lyase</keyword>
<keyword id="KW-0479">Metal-binding</keyword>
<keyword id="KW-1185">Reference proteome</keyword>
<keyword id="KW-0694">RNA-binding</keyword>
<keyword id="KW-0816">Tricarboxylic acid cycle</keyword>
<organism>
    <name type="scientific">Escherichia coli (strain K12)</name>
    <dbReference type="NCBI Taxonomy" id="83333"/>
    <lineage>
        <taxon>Bacteria</taxon>
        <taxon>Pseudomonadati</taxon>
        <taxon>Pseudomonadota</taxon>
        <taxon>Gammaproteobacteria</taxon>
        <taxon>Enterobacterales</taxon>
        <taxon>Enterobacteriaceae</taxon>
        <taxon>Escherichia</taxon>
    </lineage>
</organism>
<protein>
    <recommendedName>
        <fullName evidence="12">Aconitate hydratase B</fullName>
        <shortName evidence="12">ACN</shortName>
        <shortName evidence="12">Aconitase</shortName>
        <ecNumber evidence="1">4.2.1.3</ecNumber>
    </recommendedName>
    <alternativeName>
        <fullName evidence="15">(2R,3S)-2-methylisocitrate dehydratase</fullName>
    </alternativeName>
    <alternativeName>
        <fullName evidence="15">(2S,3R)-3-hydroxybutane-1,2,3-tricarboxylate dehydratase</fullName>
    </alternativeName>
    <alternativeName>
        <fullName evidence="11">2-methyl-cis-aconitate hydratase</fullName>
        <ecNumber evidence="5">4.2.1.99</ecNumber>
    </alternativeName>
    <alternativeName>
        <fullName evidence="14">Iron-responsive protein-like</fullName>
        <shortName evidence="14">IRP-like</shortName>
    </alternativeName>
    <alternativeName>
        <fullName evidence="10">RNA-binding protein</fullName>
    </alternativeName>
</protein>
<proteinExistence type="evidence at protein level"/>
<dbReference type="EC" id="4.2.1.3" evidence="1"/>
<dbReference type="EC" id="4.2.1.99" evidence="5"/>
<dbReference type="EMBL" id="U00096">
    <property type="protein sequence ID" value="AAC73229.1"/>
    <property type="molecule type" value="Genomic_DNA"/>
</dbReference>
<dbReference type="EMBL" id="AP009048">
    <property type="protein sequence ID" value="BAB96692.2"/>
    <property type="molecule type" value="Genomic_DNA"/>
</dbReference>
<dbReference type="EMBL" id="U41560">
    <property type="protein sequence ID" value="AAC43710.1"/>
    <property type="molecule type" value="Genomic_DNA"/>
</dbReference>
<dbReference type="PIR" id="F64734">
    <property type="entry name" value="F64734"/>
</dbReference>
<dbReference type="RefSeq" id="NP_414660.1">
    <property type="nucleotide sequence ID" value="NC_000913.3"/>
</dbReference>
<dbReference type="RefSeq" id="WP_001307570.1">
    <property type="nucleotide sequence ID" value="NZ_STEB01000010.1"/>
</dbReference>
<dbReference type="PDB" id="1L5J">
    <property type="method" value="X-ray"/>
    <property type="resolution" value="2.40 A"/>
    <property type="chains" value="A/B=1-865"/>
</dbReference>
<dbReference type="PDBsum" id="1L5J"/>
<dbReference type="SMR" id="P36683"/>
<dbReference type="BioGRID" id="4261902">
    <property type="interactions" value="121"/>
</dbReference>
<dbReference type="BioGRID" id="849264">
    <property type="interactions" value="1"/>
</dbReference>
<dbReference type="DIP" id="DIP-9044N"/>
<dbReference type="FunCoup" id="P36683">
    <property type="interactions" value="419"/>
</dbReference>
<dbReference type="IntAct" id="P36683">
    <property type="interactions" value="15"/>
</dbReference>
<dbReference type="STRING" id="511145.b0118"/>
<dbReference type="DrugBank" id="DB04351">
    <property type="generic name" value="Aconitate Ion"/>
</dbReference>
<dbReference type="CarbonylDB" id="P36683"/>
<dbReference type="jPOST" id="P36683"/>
<dbReference type="PaxDb" id="511145-b0118"/>
<dbReference type="EnsemblBacteria" id="AAC73229">
    <property type="protein sequence ID" value="AAC73229"/>
    <property type="gene ID" value="b0118"/>
</dbReference>
<dbReference type="GeneID" id="93777318"/>
<dbReference type="GeneID" id="944864"/>
<dbReference type="KEGG" id="ecj:JW0114"/>
<dbReference type="KEGG" id="eco:b0118"/>
<dbReference type="KEGG" id="ecoc:C3026_00495"/>
<dbReference type="PATRIC" id="fig|1411691.4.peg.2164"/>
<dbReference type="EchoBASE" id="EB2222"/>
<dbReference type="eggNOG" id="COG1049">
    <property type="taxonomic scope" value="Bacteria"/>
</dbReference>
<dbReference type="HOGENOM" id="CLU_016536_0_0_6"/>
<dbReference type="InParanoid" id="P36683"/>
<dbReference type="OMA" id="PLHAKAM"/>
<dbReference type="OrthoDB" id="9758061at2"/>
<dbReference type="PhylomeDB" id="P36683"/>
<dbReference type="BioCyc" id="EcoCyc:ACONITATEDEHYDRB-MONOMER"/>
<dbReference type="BioCyc" id="MetaCyc:ACONITATEDEHYDRB-MONOMER"/>
<dbReference type="BRENDA" id="4.2.1.3">
    <property type="organism ID" value="2026"/>
</dbReference>
<dbReference type="SABIO-RK" id="P36683"/>
<dbReference type="UniPathway" id="UPA00223">
    <property type="reaction ID" value="UER00718"/>
</dbReference>
<dbReference type="UniPathway" id="UPA00946"/>
<dbReference type="EvolutionaryTrace" id="P36683"/>
<dbReference type="PRO" id="PR:P36683"/>
<dbReference type="Proteomes" id="UP000000625">
    <property type="component" value="Chromosome"/>
</dbReference>
<dbReference type="GO" id="GO:0005829">
    <property type="term" value="C:cytosol"/>
    <property type="evidence" value="ECO:0000314"/>
    <property type="project" value="EcoCyc"/>
</dbReference>
<dbReference type="GO" id="GO:0047456">
    <property type="term" value="F:2-methylisocitrate dehydratase activity"/>
    <property type="evidence" value="ECO:0000314"/>
    <property type="project" value="EcoCyc"/>
</dbReference>
<dbReference type="GO" id="GO:0051539">
    <property type="term" value="F:4 iron, 4 sulfur cluster binding"/>
    <property type="evidence" value="ECO:0000314"/>
    <property type="project" value="EcoCyc"/>
</dbReference>
<dbReference type="GO" id="GO:0003994">
    <property type="term" value="F:aconitate hydratase activity"/>
    <property type="evidence" value="ECO:0000314"/>
    <property type="project" value="EcoCyc"/>
</dbReference>
<dbReference type="GO" id="GO:0046872">
    <property type="term" value="F:metal ion binding"/>
    <property type="evidence" value="ECO:0007669"/>
    <property type="project" value="UniProtKB-KW"/>
</dbReference>
<dbReference type="GO" id="GO:0003730">
    <property type="term" value="F:mRNA 3'-UTR binding"/>
    <property type="evidence" value="ECO:0000314"/>
    <property type="project" value="EcoCyc"/>
</dbReference>
<dbReference type="GO" id="GO:0003729">
    <property type="term" value="F:mRNA binding"/>
    <property type="evidence" value="ECO:0000314"/>
    <property type="project" value="EcoliWiki"/>
</dbReference>
<dbReference type="GO" id="GO:0006097">
    <property type="term" value="P:glyoxylate cycle"/>
    <property type="evidence" value="ECO:0000303"/>
    <property type="project" value="EcoliWiki"/>
</dbReference>
<dbReference type="GO" id="GO:0019629">
    <property type="term" value="P:propionate catabolic process, 2-methylcitrate cycle"/>
    <property type="evidence" value="ECO:0000314"/>
    <property type="project" value="EcoCyc"/>
</dbReference>
<dbReference type="GO" id="GO:0006417">
    <property type="term" value="P:regulation of translation"/>
    <property type="evidence" value="ECO:0000314"/>
    <property type="project" value="EcoCyc"/>
</dbReference>
<dbReference type="GO" id="GO:0006099">
    <property type="term" value="P:tricarboxylic acid cycle"/>
    <property type="evidence" value="ECO:0000318"/>
    <property type="project" value="GO_Central"/>
</dbReference>
<dbReference type="CDD" id="cd01581">
    <property type="entry name" value="AcnB"/>
    <property type="match status" value="1"/>
</dbReference>
<dbReference type="CDD" id="cd01576">
    <property type="entry name" value="AcnB_Swivel"/>
    <property type="match status" value="1"/>
</dbReference>
<dbReference type="FunFam" id="1.25.40.310:FF:000001">
    <property type="entry name" value="Aconitate hydratase B"/>
    <property type="match status" value="1"/>
</dbReference>
<dbReference type="FunFam" id="3.20.19.10:FF:000004">
    <property type="entry name" value="Aconitate hydratase B"/>
    <property type="match status" value="1"/>
</dbReference>
<dbReference type="FunFam" id="3.30.499.10:FF:000001">
    <property type="entry name" value="Aconitate hydratase B"/>
    <property type="match status" value="1"/>
</dbReference>
<dbReference type="FunFam" id="3.30.499.10:FF:000008">
    <property type="entry name" value="Aconitate hydratase B"/>
    <property type="match status" value="1"/>
</dbReference>
<dbReference type="FunFam" id="3.40.1060.10:FF:000002">
    <property type="entry name" value="Aconitate hydratase B"/>
    <property type="match status" value="1"/>
</dbReference>
<dbReference type="Gene3D" id="3.40.1060.10">
    <property type="entry name" value="Aconitase, Domain 2"/>
    <property type="match status" value="1"/>
</dbReference>
<dbReference type="Gene3D" id="3.30.499.10">
    <property type="entry name" value="Aconitase, domain 3"/>
    <property type="match status" value="2"/>
</dbReference>
<dbReference type="Gene3D" id="3.20.19.10">
    <property type="entry name" value="Aconitase, domain 4"/>
    <property type="match status" value="1"/>
</dbReference>
<dbReference type="Gene3D" id="1.25.40.310">
    <property type="entry name" value="Aconitate B, HEAT-like domain"/>
    <property type="match status" value="1"/>
</dbReference>
<dbReference type="InterPro" id="IPR015931">
    <property type="entry name" value="Acnase/IPM_dHydase_lsu_aba_1/3"/>
</dbReference>
<dbReference type="InterPro" id="IPR001030">
    <property type="entry name" value="Acoase/IPM_deHydtase_lsu_aba"/>
</dbReference>
<dbReference type="InterPro" id="IPR015928">
    <property type="entry name" value="Aconitase/3IPM_dehydase_swvl"/>
</dbReference>
<dbReference type="InterPro" id="IPR050926">
    <property type="entry name" value="Aconitase/IPM_isomerase"/>
</dbReference>
<dbReference type="InterPro" id="IPR018136">
    <property type="entry name" value="Aconitase_4Fe-4S_BS"/>
</dbReference>
<dbReference type="InterPro" id="IPR036008">
    <property type="entry name" value="Aconitase_4Fe-4S_dom"/>
</dbReference>
<dbReference type="InterPro" id="IPR004406">
    <property type="entry name" value="Aconitase_B"/>
</dbReference>
<dbReference type="InterPro" id="IPR015933">
    <property type="entry name" value="Aconitase_B_HEAT-like_dom"/>
</dbReference>
<dbReference type="InterPro" id="IPR036288">
    <property type="entry name" value="Aconitase_B_HEAT-like_dom_sf"/>
</dbReference>
<dbReference type="InterPro" id="IPR015929">
    <property type="entry name" value="Aconitase_B_swivel"/>
</dbReference>
<dbReference type="InterPro" id="IPR015932">
    <property type="entry name" value="Aconitase_dom2"/>
</dbReference>
<dbReference type="NCBIfam" id="TIGR00117">
    <property type="entry name" value="acnB"/>
    <property type="match status" value="1"/>
</dbReference>
<dbReference type="NCBIfam" id="NF006690">
    <property type="entry name" value="PRK09238.1"/>
    <property type="match status" value="1"/>
</dbReference>
<dbReference type="PANTHER" id="PTHR43160">
    <property type="entry name" value="ACONITATE HYDRATASE B"/>
    <property type="match status" value="1"/>
</dbReference>
<dbReference type="PANTHER" id="PTHR43160:SF4">
    <property type="entry name" value="ACONITATE HYDRATASE B"/>
    <property type="match status" value="1"/>
</dbReference>
<dbReference type="Pfam" id="PF00330">
    <property type="entry name" value="Aconitase"/>
    <property type="match status" value="1"/>
</dbReference>
<dbReference type="Pfam" id="PF06434">
    <property type="entry name" value="Aconitase_2_N"/>
    <property type="match status" value="1"/>
</dbReference>
<dbReference type="Pfam" id="PF11791">
    <property type="entry name" value="Aconitase_B_N"/>
    <property type="match status" value="1"/>
</dbReference>
<dbReference type="PIRSF" id="PIRSF036687">
    <property type="entry name" value="AcnB"/>
    <property type="match status" value="1"/>
</dbReference>
<dbReference type="SUPFAM" id="SSF74778">
    <property type="entry name" value="Aconitase B, N-terminal domain"/>
    <property type="match status" value="1"/>
</dbReference>
<dbReference type="SUPFAM" id="SSF53732">
    <property type="entry name" value="Aconitase iron-sulfur domain"/>
    <property type="match status" value="1"/>
</dbReference>
<dbReference type="SUPFAM" id="SSF52016">
    <property type="entry name" value="LeuD/IlvD-like"/>
    <property type="match status" value="1"/>
</dbReference>
<dbReference type="PROSITE" id="PS00450">
    <property type="entry name" value="ACONITASE_1"/>
    <property type="match status" value="1"/>
</dbReference>
<dbReference type="PROSITE" id="PS01244">
    <property type="entry name" value="ACONITASE_2"/>
    <property type="match status" value="1"/>
</dbReference>
<sequence length="865" mass="93498">MLEEYRKHVAERAAEGIAPKPLDANQMAALVELLKNPPAGEEEFLLDLLTNRVPPGVDEAAYVKAGFLAAIAKGEAKSPLLTPEKAIELLGTMQGGYNIHPLIDALDDAKLAPIAAKALSHTLLMFDNFYDVEEKAKAGNEYAKQVMQSWADAEWFLNRPALAEKLTVTVFKVTGETNTDDLSPAPDAWSRPDIPLHALAMLKNAREGIEPDQPGVVGPIKQIEALQQKGFPLAYVGDVVGTGSSRKSATNSVLWFMGDDIPHVPNKRGGGLCLGGKIAPIFFNTMEDAGALPIEVDVSNLNMGDVIDVYPYKGEVRNHETGELLATFELKTDVLIDEVRAGGRIPLIIGRGLTTKAREALGLPHSDVFRQAKDVAESDRGFSLAQKMVGRACGVKGIRPGAYCEPKMTSVGSQDTTGPMTRDELKDLACLGFSADLVMQSFCHTAAYPKPVDVNTHHTLPDFIMNRGGVSLRPGDGVIHSWLNRMLLPDTVGTGGDSHTRFPIGISFPAGSGLVAFAAATGVMPLDMPESVLVRFKGKMQPGITLRDLVHAIPLYAIKQGLLTVEKKGKKNIFSGRILEIEGLPDLKVEQAFELTDASAERSAAGCTIKLNKEPIIEYLNSNIVLLKWMIAEGYGDRRTLERRIQGMEKWLANPELLEADADAEYAAVIDIDLADIKEPILCAPNDPDDARPLSAVQGEKIDEVFIGSCMTNIGHFRAAGKLLDAHKGQLPTRLWVAPPTRMDAAQLTEEGYYSVFGKSGARIEIPGCSLCMGNQARVADGATVVSTSTRNFPNRLGTGANVFLASAELAAVAALIGKLPTPEEYQTYVAQVDKTAVDTYRYLNFNQLSQYTEKADGVIFQTAV</sequence>
<reference key="1">
    <citation type="journal article" date="1994" name="Nucleic Acids Res.">
        <title>Systematic sequencing of the Escherichia coli genome: analysis of the 2.4-4.1 min (110,917-193,643 bp) region.</title>
        <authorList>
            <person name="Fujita N."/>
            <person name="Mori H."/>
            <person name="Yura T."/>
            <person name="Ishihama A."/>
        </authorList>
    </citation>
    <scope>NUCLEOTIDE SEQUENCE [LARGE SCALE GENOMIC DNA]</scope>
    <source>
        <strain>K12 / W3110 / ATCC 27325 / DSM 5911</strain>
    </source>
</reference>
<reference key="2">
    <citation type="journal article" date="1997" name="Science">
        <title>The complete genome sequence of Escherichia coli K-12.</title>
        <authorList>
            <person name="Blattner F.R."/>
            <person name="Plunkett G. III"/>
            <person name="Bloch C.A."/>
            <person name="Perna N.T."/>
            <person name="Burland V."/>
            <person name="Riley M."/>
            <person name="Collado-Vides J."/>
            <person name="Glasner J.D."/>
            <person name="Rode C.K."/>
            <person name="Mayhew G.F."/>
            <person name="Gregor J."/>
            <person name="Davis N.W."/>
            <person name="Kirkpatrick H.A."/>
            <person name="Goeden M.A."/>
            <person name="Rose D.J."/>
            <person name="Mau B."/>
            <person name="Shao Y."/>
        </authorList>
    </citation>
    <scope>NUCLEOTIDE SEQUENCE [LARGE SCALE GENOMIC DNA]</scope>
    <source>
        <strain>K12 / MG1655 / ATCC 47076</strain>
    </source>
</reference>
<reference key="3">
    <citation type="journal article" date="2006" name="Mol. Syst. Biol.">
        <title>Highly accurate genome sequences of Escherichia coli K-12 strains MG1655 and W3110.</title>
        <authorList>
            <person name="Hayashi K."/>
            <person name="Morooka N."/>
            <person name="Yamamoto Y."/>
            <person name="Fujita K."/>
            <person name="Isono K."/>
            <person name="Choi S."/>
            <person name="Ohtsubo E."/>
            <person name="Baba T."/>
            <person name="Wanner B.L."/>
            <person name="Mori H."/>
            <person name="Horiuchi T."/>
        </authorList>
    </citation>
    <scope>NUCLEOTIDE SEQUENCE [LARGE SCALE GENOMIC DNA]</scope>
    <scope>SEQUENCE REVISION</scope>
    <source>
        <strain>K12 / W3110 / ATCC 27325 / DSM 5911</strain>
    </source>
</reference>
<reference key="4">
    <citation type="journal article" date="1996" name="Microbiology">
        <title>The second aconitase (AcnB) of Escherichia coli.</title>
        <authorList>
            <person name="Bradbury A.J."/>
            <person name="Gruer M.J."/>
            <person name="Rudd K.E."/>
            <person name="Guest J.R."/>
        </authorList>
    </citation>
    <scope>NUCLEOTIDE SEQUENCE [GENOMIC DNA] OF 1-131</scope>
    <scope>PROTEIN SEQUENCE OF 1-11</scope>
    <scope>FUNCTION</scope>
    <scope>SUBUNIT</scope>
    <source>
        <strain>K12 / W3110 / ATCC 27325 / DSM 5911</strain>
    </source>
</reference>
<reference key="5">
    <citation type="journal article" date="1997" name="Electrophoresis">
        <title>Comparing the predicted and observed properties of proteins encoded in the genome of Escherichia coli K-12.</title>
        <authorList>
            <person name="Link A.J."/>
            <person name="Robison K."/>
            <person name="Church G.M."/>
        </authorList>
    </citation>
    <scope>PROTEIN SEQUENCE OF 1-12</scope>
    <source>
        <strain>K12 / EMG2</strain>
    </source>
</reference>
<reference key="6">
    <citation type="journal article" date="2002" name="Eur. J. Biochem.">
        <title>Oxidation of propionate to pyruvate in Escherichia coli. Involvement of methylcitrate dehydratase and aconitase.</title>
        <authorList>
            <person name="Brock M."/>
            <person name="Maerker C."/>
            <person name="Schuetz A."/>
            <person name="Voelker U."/>
            <person name="Buckel W."/>
        </authorList>
    </citation>
    <scope>PROTEIN SEQUENCE OF 1-15</scope>
    <scope>FUNCTION AS A 2-METHYL-ACONITATE HYDRATASE</scope>
    <scope>CATALYTIC ACTIVITY</scope>
    <scope>SUBSTRATE SPECIFICITY</scope>
    <scope>BIOPHYSICOCHEMICAL PROPERTIES</scope>
</reference>
<reference key="7">
    <citation type="journal article" date="1999" name="Biochem. J.">
        <title>Biochemical and spectroscopic characterization of Escherichia coli aconitases (AcnA and AcnB).</title>
        <authorList>
            <person name="Jordan P.A."/>
            <person name="Tang Y."/>
            <person name="Bradbury A.J."/>
            <person name="Thomson A.J."/>
            <person name="Guest J.R."/>
        </authorList>
    </citation>
    <scope>PROTEIN SEQUENCE OF 568-663</scope>
    <scope>FUNCTION</scope>
    <scope>CATALYTIC ACTIVITY</scope>
    <scope>BIOPHYSICOCHEMICAL PROPERTIES</scope>
    <scope>MAGNETIC CIRCULAR DICHROISM</scope>
    <scope>EPR SPECTROSCOPY</scope>
</reference>
<reference key="8">
    <citation type="journal article" date="1994" name="Microbiology">
        <title>Two genetically-distinct and differentially-regulated aconitases (AcnA and AcnB) in Escherichia coli.</title>
        <authorList>
            <person name="Gruer M.J."/>
            <person name="Guest J.R."/>
        </authorList>
    </citation>
    <scope>FUNCTION</scope>
</reference>
<reference key="9">
    <citation type="journal article" date="1997" name="Microbiology">
        <title>Construction and properties of aconitase mutants of Escherichia coli.</title>
        <authorList>
            <person name="Gruer M.J."/>
            <person name="Bradbury A.J."/>
            <person name="Guest J.R."/>
        </authorList>
    </citation>
    <scope>DISRUPTION PHENOTYPE</scope>
</reference>
<reference key="10">
    <citation type="journal article" date="1999" name="Microbiology">
        <title>Direct evidence for mRNA binding and post-transcriptional regulation by Escherichia coli aconitases.</title>
        <authorList>
            <person name="Tang Y."/>
            <person name="Guest J.R."/>
        </authorList>
    </citation>
    <scope>FUNCTION AS A RNA-BINDING PROTEIN</scope>
</reference>
<reference key="11">
    <citation type="journal article" date="2002" name="Microbiology">
        <title>Escherichia coli aconitases and oxidative stress: post-transcriptional regulation of sodA expression.</title>
        <authorList>
            <person name="Tang Y."/>
            <person name="Quail M.A."/>
            <person name="Artymiuk P.J."/>
            <person name="Guest J.R."/>
            <person name="Green J."/>
        </authorList>
    </citation>
    <scope>FUNCTION</scope>
    <scope>DISRUPTION PHENOTYPE</scope>
</reference>
<reference key="12">
    <citation type="journal article" date="2005" name="Mol. Microbiol.">
        <title>Switching aconitase B between catalytic and regulatory modes involves iron-dependent dimer formation.</title>
        <authorList>
            <person name="Tang Y."/>
            <person name="Guest J.R."/>
            <person name="Artymiuk P.J."/>
            <person name="Green J."/>
        </authorList>
    </citation>
    <scope>FUNCTION</scope>
    <scope>DISRUPTION PHENOTYPE</scope>
    <scope>MUTAGENESIS OF CYS-769</scope>
    <scope>SUBUNIT</scope>
</reference>
<reference key="13">
    <citation type="journal article" date="2002" name="Nat. Struct. Biol.">
        <title>E. coli aconitase B structure reveals a HEAT-like domain with implications for protein-protein recognition.</title>
        <authorList>
            <person name="Williams C.H. Jr."/>
            <person name="Stillman T.J."/>
            <person name="Barynin V.V."/>
            <person name="Sedelnikova S.E."/>
            <person name="Tang Y."/>
            <person name="Green J."/>
            <person name="Guest J.R."/>
            <person name="Artymiuk P.J."/>
        </authorList>
    </citation>
    <scope>X-RAY CRYSTALLOGRAPHY (2.4 ANGSTROMS) IN COMPLEX WITH IRON-SULFUR AND THE SUBSTRATE ANALOGS</scope>
    <scope>COFACTOR</scope>
    <scope>SUBUNIT</scope>
</reference>